<keyword id="KW-1185">Reference proteome</keyword>
<keyword id="KW-0732">Signal</keyword>
<comment type="similarity">
    <text evidence="1">Belongs to the UPF0319 family.</text>
</comment>
<protein>
    <recommendedName>
        <fullName evidence="1">UPF0319 protein YccT</fullName>
    </recommendedName>
</protein>
<sequence>MKTGIVTTLIALCLPVSVFATTLRLSTDVDLLVLDGKKVSSSLLRGADSIELDNGPHQLVFRVEKTIHLSNSEERLYISPPLVVSFNTQLINQVNFRLPRLENEREANHFDAAPRLELLDGDATPIPVKLDILAITSTAKTIDYEVEVERYNKSAKRASLPQFATMMADDSTLLSGVSELDAIPPQSQVLTEQRLKYWFKLADPQTRNTFLQWAEKQPSS</sequence>
<proteinExistence type="inferred from homology"/>
<organism>
    <name type="scientific">Shigella sonnei (strain Ss046)</name>
    <dbReference type="NCBI Taxonomy" id="300269"/>
    <lineage>
        <taxon>Bacteria</taxon>
        <taxon>Pseudomonadati</taxon>
        <taxon>Pseudomonadota</taxon>
        <taxon>Gammaproteobacteria</taxon>
        <taxon>Enterobacterales</taxon>
        <taxon>Enterobacteriaceae</taxon>
        <taxon>Shigella</taxon>
    </lineage>
</organism>
<feature type="signal peptide" evidence="1">
    <location>
        <begin position="1"/>
        <end position="20"/>
    </location>
</feature>
<feature type="chain" id="PRO_1000046910" description="UPF0319 protein YccT">
    <location>
        <begin position="21"/>
        <end position="220"/>
    </location>
</feature>
<reference key="1">
    <citation type="journal article" date="2005" name="Nucleic Acids Res.">
        <title>Genome dynamics and diversity of Shigella species, the etiologic agents of bacillary dysentery.</title>
        <authorList>
            <person name="Yang F."/>
            <person name="Yang J."/>
            <person name="Zhang X."/>
            <person name="Chen L."/>
            <person name="Jiang Y."/>
            <person name="Yan Y."/>
            <person name="Tang X."/>
            <person name="Wang J."/>
            <person name="Xiong Z."/>
            <person name="Dong J."/>
            <person name="Xue Y."/>
            <person name="Zhu Y."/>
            <person name="Xu X."/>
            <person name="Sun L."/>
            <person name="Chen S."/>
            <person name="Nie H."/>
            <person name="Peng J."/>
            <person name="Xu J."/>
            <person name="Wang Y."/>
            <person name="Yuan Z."/>
            <person name="Wen Y."/>
            <person name="Yao Z."/>
            <person name="Shen Y."/>
            <person name="Qiang B."/>
            <person name="Hou Y."/>
            <person name="Yu J."/>
            <person name="Jin Q."/>
        </authorList>
    </citation>
    <scope>NUCLEOTIDE SEQUENCE [LARGE SCALE GENOMIC DNA]</scope>
    <source>
        <strain>Ss046</strain>
    </source>
</reference>
<accession>Q3Z3F7</accession>
<evidence type="ECO:0000255" key="1">
    <source>
        <dbReference type="HAMAP-Rule" id="MF_00789"/>
    </source>
</evidence>
<gene>
    <name evidence="1" type="primary">yccT</name>
    <name type="ordered locus">SSON_0968</name>
</gene>
<name>YCCT_SHISS</name>
<dbReference type="EMBL" id="CP000038">
    <property type="protein sequence ID" value="AAZ87705.1"/>
    <property type="molecule type" value="Genomic_DNA"/>
</dbReference>
<dbReference type="RefSeq" id="WP_000847791.1">
    <property type="nucleotide sequence ID" value="NC_007384.1"/>
</dbReference>
<dbReference type="KEGG" id="ssn:SSON_0968"/>
<dbReference type="HOGENOM" id="CLU_073782_2_0_6"/>
<dbReference type="Proteomes" id="UP000002529">
    <property type="component" value="Chromosome"/>
</dbReference>
<dbReference type="HAMAP" id="MF_00789">
    <property type="entry name" value="UPF0319"/>
    <property type="match status" value="1"/>
</dbReference>
<dbReference type="InterPro" id="IPR018635">
    <property type="entry name" value="UPF0319"/>
</dbReference>
<dbReference type="NCBIfam" id="NF047712">
    <property type="entry name" value="CrliSynInhib"/>
    <property type="match status" value="1"/>
</dbReference>
<dbReference type="NCBIfam" id="NF002967">
    <property type="entry name" value="PRK03641.1"/>
    <property type="match status" value="1"/>
</dbReference>
<dbReference type="PANTHER" id="PTHR38108">
    <property type="entry name" value="UPF0319 PROTEIN YCCT"/>
    <property type="match status" value="1"/>
</dbReference>
<dbReference type="PANTHER" id="PTHR38108:SF1">
    <property type="entry name" value="UPF0319 PROTEIN YCCT"/>
    <property type="match status" value="1"/>
</dbReference>
<dbReference type="Pfam" id="PF09829">
    <property type="entry name" value="DUF2057"/>
    <property type="match status" value="1"/>
</dbReference>